<keyword id="KW-0067">ATP-binding</keyword>
<keyword id="KW-0418">Kinase</keyword>
<keyword id="KW-0472">Membrane</keyword>
<keyword id="KW-0496">Mitochondrion</keyword>
<keyword id="KW-0547">Nucleotide-binding</keyword>
<keyword id="KW-1185">Reference proteome</keyword>
<keyword id="KW-0808">Transferase</keyword>
<keyword id="KW-0809">Transit peptide</keyword>
<keyword id="KW-0812">Transmembrane</keyword>
<keyword id="KW-1133">Transmembrane helix</keyword>
<keyword id="KW-0831">Ubiquinone biosynthesis</keyword>
<accession>Q29RI0</accession>
<accession>Q0V8G9</accession>
<dbReference type="EC" id="2.7.-.-" evidence="1"/>
<dbReference type="EMBL" id="BC114164">
    <property type="protein sequence ID" value="AAI14165.1"/>
    <property type="molecule type" value="mRNA"/>
</dbReference>
<dbReference type="EMBL" id="BT026249">
    <property type="protein sequence ID" value="ABG67088.1"/>
    <property type="molecule type" value="mRNA"/>
</dbReference>
<dbReference type="RefSeq" id="NP_001039884.1">
    <property type="nucleotide sequence ID" value="NM_001046419.2"/>
</dbReference>
<dbReference type="RefSeq" id="XP_010811432.1">
    <property type="nucleotide sequence ID" value="XM_010813130.4"/>
</dbReference>
<dbReference type="SMR" id="Q29RI0"/>
<dbReference type="FunCoup" id="Q29RI0">
    <property type="interactions" value="1289"/>
</dbReference>
<dbReference type="STRING" id="9913.ENSBTAP00000071794"/>
<dbReference type="PaxDb" id="9913-ENSBTAP00000029167"/>
<dbReference type="Ensembl" id="ENSBTAT00000029167.6">
    <property type="protein sequence ID" value="ENSBTAP00000029167.5"/>
    <property type="gene ID" value="ENSBTAG00000021880.7"/>
</dbReference>
<dbReference type="GeneID" id="536925"/>
<dbReference type="KEGG" id="bta:536925"/>
<dbReference type="CTD" id="56997"/>
<dbReference type="VEuPathDB" id="HostDB:ENSBTAG00000021880"/>
<dbReference type="VGNC" id="VGNC:27616">
    <property type="gene designation" value="COQ8A"/>
</dbReference>
<dbReference type="eggNOG" id="KOG1234">
    <property type="taxonomic scope" value="Eukaryota"/>
</dbReference>
<dbReference type="GeneTree" id="ENSGT00940000156810"/>
<dbReference type="HOGENOM" id="CLU_006533_9_1_1"/>
<dbReference type="InParanoid" id="Q29RI0"/>
<dbReference type="OMA" id="PEYYVPR"/>
<dbReference type="OrthoDB" id="201153at2759"/>
<dbReference type="TreeFam" id="TF300630"/>
<dbReference type="Reactome" id="R-BTA-2142789">
    <property type="pathway name" value="Ubiquinol biosynthesis"/>
</dbReference>
<dbReference type="UniPathway" id="UPA00232"/>
<dbReference type="Proteomes" id="UP000009136">
    <property type="component" value="Chromosome 16"/>
</dbReference>
<dbReference type="Bgee" id="ENSBTAG00000021880">
    <property type="expression patterns" value="Expressed in corpus luteum and 104 other cell types or tissues"/>
</dbReference>
<dbReference type="GO" id="GO:0031314">
    <property type="term" value="C:extrinsic component of mitochondrial inner membrane"/>
    <property type="evidence" value="ECO:0007669"/>
    <property type="project" value="Ensembl"/>
</dbReference>
<dbReference type="GO" id="GO:0005739">
    <property type="term" value="C:mitochondrion"/>
    <property type="evidence" value="ECO:0000250"/>
    <property type="project" value="UniProtKB"/>
</dbReference>
<dbReference type="GO" id="GO:0043531">
    <property type="term" value="F:ADP binding"/>
    <property type="evidence" value="ECO:0000250"/>
    <property type="project" value="UniProtKB"/>
</dbReference>
<dbReference type="GO" id="GO:0005524">
    <property type="term" value="F:ATP binding"/>
    <property type="evidence" value="ECO:0007669"/>
    <property type="project" value="UniProtKB-KW"/>
</dbReference>
<dbReference type="GO" id="GO:0008047">
    <property type="term" value="F:enzyme activator activity"/>
    <property type="evidence" value="ECO:0007669"/>
    <property type="project" value="Ensembl"/>
</dbReference>
<dbReference type="GO" id="GO:0016301">
    <property type="term" value="F:kinase activity"/>
    <property type="evidence" value="ECO:0000250"/>
    <property type="project" value="UniProtKB"/>
</dbReference>
<dbReference type="GO" id="GO:0004672">
    <property type="term" value="F:protein kinase activity"/>
    <property type="evidence" value="ECO:0000250"/>
    <property type="project" value="UniProtKB"/>
</dbReference>
<dbReference type="GO" id="GO:0016310">
    <property type="term" value="P:phosphorylation"/>
    <property type="evidence" value="ECO:0000250"/>
    <property type="project" value="UniProtKB"/>
</dbReference>
<dbReference type="GO" id="GO:0006744">
    <property type="term" value="P:ubiquinone biosynthetic process"/>
    <property type="evidence" value="ECO:0000250"/>
    <property type="project" value="UniProtKB"/>
</dbReference>
<dbReference type="CDD" id="cd13970">
    <property type="entry name" value="ABC1_ADCK3"/>
    <property type="match status" value="1"/>
</dbReference>
<dbReference type="InterPro" id="IPR004147">
    <property type="entry name" value="ABC1_dom"/>
</dbReference>
<dbReference type="InterPro" id="IPR034646">
    <property type="entry name" value="ADCK3_dom"/>
</dbReference>
<dbReference type="InterPro" id="IPR051409">
    <property type="entry name" value="Atypical_kinase_ADCK"/>
</dbReference>
<dbReference type="InterPro" id="IPR011009">
    <property type="entry name" value="Kinase-like_dom_sf"/>
</dbReference>
<dbReference type="PANTHER" id="PTHR43851">
    <property type="match status" value="1"/>
</dbReference>
<dbReference type="PANTHER" id="PTHR43851:SF1">
    <property type="entry name" value="ATYPICAL KINASE COQ8A, MITOCHONDRIAL"/>
    <property type="match status" value="1"/>
</dbReference>
<dbReference type="Pfam" id="PF03109">
    <property type="entry name" value="ABC1"/>
    <property type="match status" value="1"/>
</dbReference>
<dbReference type="SUPFAM" id="SSF56112">
    <property type="entry name" value="Protein kinase-like (PK-like)"/>
    <property type="match status" value="1"/>
</dbReference>
<proteinExistence type="evidence at transcript level"/>
<sequence>MAAMLGDAIMLIKGFVKLTQAAVETHLQHLGLSGELLMAVRALQSTATEQVGMVFGQVQGQETPEEYYSESLDDPEGAFHFSGMRAESASADVSAASSPEQSPPPWAHAAGSEGPAPAYVASAPFREGGVLGQAASPLGRVNGRLFASPRDPFSAPGLQRRVYHQDQSSMGGLTAEDIEKARQAKARPESKPHKQALSEHARERKVPVTRIGRLANFGGLAVGLGFGALAEVAKKSLRPDDPSGKKAVLDSSPFLSEANAERIVRTLCKVRGAALKLGQMLSIQDDAFINPHLAKIFDRVRQSADFMPLKQMMKTLNNDLGPNWRDKLEYFEERPFAAASIGQVHLARLKGGREVAMKIQYPGVAQSINSDVNNLMTVLNMSNMLPEGLFPEHLIDVLRRELALECDYQREAACARRFRELLKDHPFFYVPEIVDELCSPHVLTTELVSGFPLDQAEGLSQEIRNEICYNILVLCLRELFEFQFMQTDPNWSNFFYDPELHKVALLDFGATREFDRSFTDLYIQIIRAAANQDREAVLKKSIEMKFLTGYEVKAMEDAHLDAILILGEAFASEEPFDFGTQSTTEKIHNLIPIMLKHRLVPPPEETYSLHRKMGGSFLICSKLKARFPCKAMFEEAYSNYCRRQAEQQ</sequence>
<protein>
    <recommendedName>
        <fullName evidence="5">Atypical kinase COQ8A, mitochondrial</fullName>
        <ecNumber evidence="1">2.7.-.-</ecNumber>
    </recommendedName>
    <alternativeName>
        <fullName evidence="1">Chaperone activity of bc1 complex-like</fullName>
        <shortName evidence="1">Chaperone-ABC1-like</shortName>
    </alternativeName>
    <alternativeName>
        <fullName evidence="1">Coenzyme Q protein 8A</fullName>
    </alternativeName>
    <alternativeName>
        <fullName evidence="1">aarF domain-containing protein kinase 3</fullName>
    </alternativeName>
</protein>
<comment type="function">
    <text evidence="1 2">Atypical kinase involved in the biosynthesis of coenzyme Q, also named ubiquinone, an essential lipid-soluble electron transporter for aerobic cellular respiration (By similarity). Its substrate specificity is still unclear: may act as a protein kinase that mediates phosphorylation of COQ3 (By similarity). According to other reports, acts as a small molecule kinase, possibly a lipid kinase that phosphorylates a prenyl lipid in the ubiquinone biosynthesis pathway, as suggested by its ability to bind coenzyme Q lipid intermediates (By similarity). However, the small molecule kinase activity was not confirmed by another publication (By similarity). Shows an unusual selectivity for binding ADP over ATP (By similarity).</text>
</comment>
<comment type="activity regulation">
    <text evidence="1">Autoinhibited by the N-terminal domain, containing the KxGQ motif, that completely occludes the typical substrate binding pocket. Nucleotide-binding relieves inhibition.</text>
</comment>
<comment type="pathway">
    <text evidence="1">Cofactor biosynthesis; ubiquinone biosynthesis.</text>
</comment>
<comment type="subunit">
    <text evidence="1">Homodimer; homodimerizes via its transmembrane region. Interacts with the multi-subunit COQ enzyme complex, composed of at least COQ3, COQ4, COQ5, COQ6, COQ7 and COQ9.</text>
</comment>
<comment type="subcellular location">
    <subcellularLocation>
        <location evidence="1">Mitochondrion membrane</location>
        <topology evidence="3">Single-pass membrane protein</topology>
    </subcellularLocation>
</comment>
<comment type="domain">
    <text evidence="1">Adopts an atypical protein kinase-like fold: while it adopts a core fold similar to that of well-characterized protein kinase-like domains, a number of features are positioned to inhibit the kinase activity: (1) an atypical AAAS motif in an alanine-rich (A-rich) loop that replaces the canonical glycine-rich (G-rich) nucleotide-binding loop and limits ATP binding by establishing an unusual selectivity for ADP and (2) an N-terminal domain, containing the KxGQ motif, that completely occludes the typical substrate binding pocket. Nucleotide-binding opens the substrate binding pocket and flips the active site from inside the hydrophobic core into a catalytically competent, solvent-exposed posture.</text>
</comment>
<comment type="similarity">
    <text evidence="5">Belongs to the protein kinase superfamily. ADCK protein kinase family.</text>
</comment>
<evidence type="ECO:0000250" key="1">
    <source>
        <dbReference type="UniProtKB" id="Q8NI60"/>
    </source>
</evidence>
<evidence type="ECO:0000250" key="2">
    <source>
        <dbReference type="UniProtKB" id="Q96D53"/>
    </source>
</evidence>
<evidence type="ECO:0000255" key="3"/>
<evidence type="ECO:0000256" key="4">
    <source>
        <dbReference type="SAM" id="MobiDB-lite"/>
    </source>
</evidence>
<evidence type="ECO:0000305" key="5"/>
<gene>
    <name evidence="1" type="primary">COQ8A</name>
    <name evidence="1" type="synonym">ADCK3</name>
    <name evidence="1" type="synonym">CABC1</name>
</gene>
<feature type="transit peptide" description="Mitochondrion" evidence="1">
    <location>
        <begin position="1"/>
        <end position="162"/>
    </location>
</feature>
<feature type="chain" id="PRO_0000271794" description="Atypical kinase COQ8A, mitochondrial">
    <location>
        <begin position="163"/>
        <end position="648"/>
    </location>
</feature>
<feature type="transmembrane region" description="Helical" evidence="3">
    <location>
        <begin position="214"/>
        <end position="230"/>
    </location>
</feature>
<feature type="domain" description="Protein kinase">
    <location>
        <begin position="329"/>
        <end position="518"/>
    </location>
</feature>
<feature type="region of interest" description="Disordered" evidence="4">
    <location>
        <begin position="90"/>
        <end position="115"/>
    </location>
</feature>
<feature type="region of interest" description="Disordered" evidence="4">
    <location>
        <begin position="183"/>
        <end position="204"/>
    </location>
</feature>
<feature type="short sequence motif" description="KxGQ motif" evidence="1">
    <location>
        <begin position="276"/>
        <end position="279"/>
    </location>
</feature>
<feature type="short sequence motif" description="AAAS motif" evidence="1">
    <location>
        <begin position="337"/>
        <end position="340"/>
    </location>
</feature>
<feature type="compositionally biased region" description="Low complexity" evidence="4">
    <location>
        <begin position="90"/>
        <end position="100"/>
    </location>
</feature>
<feature type="active site" description="Proton acceptor" evidence="1">
    <location>
        <position position="488"/>
    </location>
</feature>
<feature type="binding site" evidence="1">
    <location>
        <position position="340"/>
    </location>
    <ligand>
        <name>ATP</name>
        <dbReference type="ChEBI" id="CHEBI:30616"/>
    </ligand>
</feature>
<feature type="binding site" evidence="1">
    <location>
        <position position="358"/>
    </location>
    <ligand>
        <name>ATP</name>
        <dbReference type="ChEBI" id="CHEBI:30616"/>
    </ligand>
</feature>
<feature type="binding site" evidence="1">
    <location>
        <begin position="445"/>
        <end position="448"/>
    </location>
    <ligand>
        <name>ATP</name>
        <dbReference type="ChEBI" id="CHEBI:30616"/>
    </ligand>
</feature>
<feature type="binding site" evidence="1">
    <location>
        <position position="493"/>
    </location>
    <ligand>
        <name>ATP</name>
        <dbReference type="ChEBI" id="CHEBI:30616"/>
    </ligand>
</feature>
<feature type="binding site" evidence="1">
    <location>
        <position position="507"/>
    </location>
    <ligand>
        <name>ATP</name>
        <dbReference type="ChEBI" id="CHEBI:30616"/>
    </ligand>
</feature>
<organism>
    <name type="scientific">Bos taurus</name>
    <name type="common">Bovine</name>
    <dbReference type="NCBI Taxonomy" id="9913"/>
    <lineage>
        <taxon>Eukaryota</taxon>
        <taxon>Metazoa</taxon>
        <taxon>Chordata</taxon>
        <taxon>Craniata</taxon>
        <taxon>Vertebrata</taxon>
        <taxon>Euteleostomi</taxon>
        <taxon>Mammalia</taxon>
        <taxon>Eutheria</taxon>
        <taxon>Laurasiatheria</taxon>
        <taxon>Artiodactyla</taxon>
        <taxon>Ruminantia</taxon>
        <taxon>Pecora</taxon>
        <taxon>Bovidae</taxon>
        <taxon>Bovinae</taxon>
        <taxon>Bos</taxon>
    </lineage>
</organism>
<reference key="1">
    <citation type="submission" date="2006-02" db="EMBL/GenBank/DDBJ databases">
        <authorList>
            <consortium name="NIH - Mammalian Gene Collection (MGC) project"/>
        </authorList>
    </citation>
    <scope>NUCLEOTIDE SEQUENCE [LARGE SCALE MRNA]</scope>
    <source>
        <strain>Hereford</strain>
        <tissue>Heart ventricle</tissue>
    </source>
</reference>
<reference key="2">
    <citation type="journal article" date="2005" name="BMC Genomics">
        <title>Characterization of 954 bovine full-CDS cDNA sequences.</title>
        <authorList>
            <person name="Harhay G.P."/>
            <person name="Sonstegard T.S."/>
            <person name="Keele J.W."/>
            <person name="Heaton M.P."/>
            <person name="Clawson M.L."/>
            <person name="Snelling W.M."/>
            <person name="Wiedmann R.T."/>
            <person name="Van Tassell C.P."/>
            <person name="Smith T.P.L."/>
        </authorList>
    </citation>
    <scope>NUCLEOTIDE SEQUENCE [LARGE SCALE MRNA] OF 262-648</scope>
</reference>
<name>COQ8A_BOVIN</name>